<organism>
    <name type="scientific">Cannabis sativa</name>
    <name type="common">Hemp</name>
    <name type="synonym">Marijuana</name>
    <dbReference type="NCBI Taxonomy" id="3483"/>
    <lineage>
        <taxon>Eukaryota</taxon>
        <taxon>Viridiplantae</taxon>
        <taxon>Streptophyta</taxon>
        <taxon>Embryophyta</taxon>
        <taxon>Tracheophyta</taxon>
        <taxon>Spermatophyta</taxon>
        <taxon>Magnoliopsida</taxon>
        <taxon>eudicotyledons</taxon>
        <taxon>Gunneridae</taxon>
        <taxon>Pentapetalae</taxon>
        <taxon>rosids</taxon>
        <taxon>fabids</taxon>
        <taxon>Rosales</taxon>
        <taxon>Cannabaceae</taxon>
        <taxon>Cannabis</taxon>
    </lineage>
</organism>
<comment type="function">
    <text evidence="4">Involved in monoterpene (C10) olefins biosynthesis, constituants of cannabinoids and terpenoids-rich resins (PubMed:28355238). Catalyzes mainly the conversion of (2E)-geranyl diphosphate to alpha-terpinene and gamma-terpinene (PubMed:28355238).</text>
</comment>
<comment type="catalytic activity">
    <reaction evidence="4">
        <text>(2E)-geranyl diphosphate = alpha-terpinene + diphosphate</text>
        <dbReference type="Rhea" id="RHEA:32563"/>
        <dbReference type="ChEBI" id="CHEBI:10334"/>
        <dbReference type="ChEBI" id="CHEBI:33019"/>
        <dbReference type="ChEBI" id="CHEBI:58057"/>
        <dbReference type="EC" id="4.2.3.115"/>
    </reaction>
    <physiologicalReaction direction="left-to-right" evidence="4">
        <dbReference type="Rhea" id="RHEA:32564"/>
    </physiologicalReaction>
</comment>
<comment type="catalytic activity">
    <reaction evidence="4">
        <text>(2E)-geranyl diphosphate = gamma-terpinene + diphosphate</text>
        <dbReference type="Rhea" id="RHEA:32559"/>
        <dbReference type="ChEBI" id="CHEBI:10577"/>
        <dbReference type="ChEBI" id="CHEBI:33019"/>
        <dbReference type="ChEBI" id="CHEBI:58057"/>
        <dbReference type="EC" id="4.2.3.114"/>
    </reaction>
    <physiologicalReaction direction="left-to-right" evidence="4">
        <dbReference type="Rhea" id="RHEA:32560"/>
    </physiologicalReaction>
</comment>
<comment type="cofactor">
    <cofactor evidence="1">
        <name>Mg(2+)</name>
        <dbReference type="ChEBI" id="CHEBI:18420"/>
    </cofactor>
    <cofactor evidence="1">
        <name>Mn(2+)</name>
        <dbReference type="ChEBI" id="CHEBI:29035"/>
    </cofactor>
    <text evidence="1">Binds 3 Mg(2+) or Mn(2+) ions per subunit.</text>
</comment>
<comment type="pathway">
    <text evidence="4">Secondary metabolite biosynthesis; terpenoid biosynthesis.</text>
</comment>
<comment type="subcellular location">
    <subcellularLocation>
        <location evidence="3">Plastid</location>
        <location evidence="3">Chloroplast</location>
    </subcellularLocation>
</comment>
<comment type="domain">
    <text evidence="2">The Asp-Asp-Xaa-Xaa-Asp/Glu (DDXXD/E) motif is important for the catalytic activity, presumably through binding to Mg(2+).</text>
</comment>
<comment type="similarity">
    <text evidence="6">Belongs to the terpene synthase family. Tpsb subfamily.</text>
</comment>
<comment type="sequence caution" evidence="6">
    <conflict type="erroneous gene model prediction"/>
</comment>
<comment type="sequence caution" evidence="6">
    <conflict type="erroneous gene model prediction"/>
</comment>
<feature type="transit peptide" description="Chloroplast" evidence="3">
    <location>
        <begin position="1"/>
        <end position="33"/>
    </location>
</feature>
<feature type="chain" id="PRO_0000460907" description="Alpha-terpinene synthase TPS33PK, chloroplastic">
    <location>
        <begin position="34"/>
        <end position="615"/>
    </location>
</feature>
<feature type="short sequence motif" description="DDXXD motif" evidence="2">
    <location>
        <begin position="371"/>
        <end position="375"/>
    </location>
</feature>
<feature type="binding site" evidence="2">
    <location>
        <position position="334"/>
    </location>
    <ligand>
        <name>(2E)-geranyl diphosphate</name>
        <dbReference type="ChEBI" id="CHEBI:58057"/>
    </ligand>
</feature>
<feature type="binding site" evidence="2">
    <location>
        <position position="371"/>
    </location>
    <ligand>
        <name>(2E)-geranyl diphosphate</name>
        <dbReference type="ChEBI" id="CHEBI:58057"/>
    </ligand>
</feature>
<feature type="binding site" evidence="2">
    <location>
        <position position="371"/>
    </location>
    <ligand>
        <name>Mg(2+)</name>
        <dbReference type="ChEBI" id="CHEBI:18420"/>
        <label>1</label>
    </ligand>
</feature>
<feature type="binding site" evidence="2">
    <location>
        <position position="371"/>
    </location>
    <ligand>
        <name>Mg(2+)</name>
        <dbReference type="ChEBI" id="CHEBI:18420"/>
        <label>2</label>
    </ligand>
</feature>
<feature type="binding site" evidence="2">
    <location>
        <position position="375"/>
    </location>
    <ligand>
        <name>(2E)-geranyl diphosphate</name>
        <dbReference type="ChEBI" id="CHEBI:58057"/>
    </ligand>
</feature>
<feature type="binding site" evidence="2">
    <location>
        <position position="375"/>
    </location>
    <ligand>
        <name>Mg(2+)</name>
        <dbReference type="ChEBI" id="CHEBI:18420"/>
        <label>1</label>
    </ligand>
</feature>
<feature type="binding site" evidence="2">
    <location>
        <position position="375"/>
    </location>
    <ligand>
        <name>Mg(2+)</name>
        <dbReference type="ChEBI" id="CHEBI:18420"/>
        <label>2</label>
    </ligand>
</feature>
<feature type="binding site" evidence="2">
    <location>
        <position position="513"/>
    </location>
    <ligand>
        <name>(2E)-geranyl diphosphate</name>
        <dbReference type="ChEBI" id="CHEBI:58057"/>
    </ligand>
</feature>
<feature type="binding site" evidence="2">
    <location>
        <position position="516"/>
    </location>
    <ligand>
        <name>(2E)-geranyl diphosphate</name>
        <dbReference type="ChEBI" id="CHEBI:58057"/>
    </ligand>
</feature>
<feature type="binding site" evidence="2">
    <location>
        <position position="516"/>
    </location>
    <ligand>
        <name>Mg(2+)</name>
        <dbReference type="ChEBI" id="CHEBI:18420"/>
        <label>3</label>
    </ligand>
</feature>
<feature type="binding site" evidence="2">
    <location>
        <position position="520"/>
    </location>
    <ligand>
        <name>Mg(2+)</name>
        <dbReference type="ChEBI" id="CHEBI:18420"/>
        <label>3</label>
    </ligand>
</feature>
<feature type="binding site" evidence="2">
    <location>
        <position position="524"/>
    </location>
    <ligand>
        <name>Mg(2+)</name>
        <dbReference type="ChEBI" id="CHEBI:18420"/>
        <label>3</label>
    </ligand>
</feature>
<feature type="sequence conflict" description="In Ref. 1; ARE72255." evidence="6" ref="1">
    <location>
        <begin position="2"/>
        <end position="3"/>
    </location>
</feature>
<feature type="sequence conflict" description="In Ref. 1; ARE72255." evidence="6" ref="1">
    <location>
        <position position="121"/>
    </location>
</feature>
<feature type="sequence conflict" description="In Ref. 1; ARE72255." evidence="6" ref="1">
    <original>I</original>
    <variation>G</variation>
    <location>
        <position position="142"/>
    </location>
</feature>
<feature type="sequence conflict" description="In Ref. 1; ARE72255." evidence="6" ref="1">
    <location>
        <begin position="231"/>
        <end position="232"/>
    </location>
</feature>
<feature type="sequence conflict" description="In Ref. 1; ARE72255." evidence="6" ref="1">
    <location>
        <begin position="609"/>
        <end position="610"/>
    </location>
</feature>
<proteinExistence type="evidence at protein level"/>
<gene>
    <name evidence="5" type="primary">TPS33PK</name>
    <name evidence="7" type="ORF">F8388_024571</name>
    <name evidence="8" type="ORF">G4B88_023555</name>
</gene>
<dbReference type="EC" id="4.2.3.115" evidence="4"/>
<dbReference type="EC" id="4.2.3.114" evidence="4"/>
<dbReference type="EMBL" id="KY014559">
    <property type="protein sequence ID" value="ARE72255.2"/>
    <property type="molecule type" value="mRNA"/>
</dbReference>
<dbReference type="EMBL" id="JAATIP010000065">
    <property type="protein sequence ID" value="KAF4380278.1"/>
    <property type="status" value="ALT_SEQ"/>
    <property type="molecule type" value="Genomic_DNA"/>
</dbReference>
<dbReference type="EMBL" id="JAATIQ010000022">
    <property type="protein sequence ID" value="KAF4398961.1"/>
    <property type="status" value="ALT_SEQ"/>
    <property type="molecule type" value="Genomic_DNA"/>
</dbReference>
<dbReference type="SMR" id="A0A1V0QSF4"/>
<dbReference type="UniPathway" id="UPA00213"/>
<dbReference type="Proteomes" id="UP000525078">
    <property type="component" value="Unassembled WGS sequence"/>
</dbReference>
<dbReference type="Proteomes" id="UP000583929">
    <property type="component" value="Unassembled WGS sequence"/>
</dbReference>
<dbReference type="Proteomes" id="UP000596661">
    <property type="component" value="Unplaced"/>
</dbReference>
<dbReference type="GO" id="GO:0009507">
    <property type="term" value="C:chloroplast"/>
    <property type="evidence" value="ECO:0007669"/>
    <property type="project" value="UniProtKB-SubCell"/>
</dbReference>
<dbReference type="GO" id="GO:0000287">
    <property type="term" value="F:magnesium ion binding"/>
    <property type="evidence" value="ECO:0007669"/>
    <property type="project" value="InterPro"/>
</dbReference>
<dbReference type="GO" id="GO:0010333">
    <property type="term" value="F:terpene synthase activity"/>
    <property type="evidence" value="ECO:0007669"/>
    <property type="project" value="InterPro"/>
</dbReference>
<dbReference type="GO" id="GO:0016102">
    <property type="term" value="P:diterpenoid biosynthetic process"/>
    <property type="evidence" value="ECO:0007669"/>
    <property type="project" value="InterPro"/>
</dbReference>
<dbReference type="CDD" id="cd00684">
    <property type="entry name" value="Terpene_cyclase_plant_C1"/>
    <property type="match status" value="1"/>
</dbReference>
<dbReference type="FunFam" id="1.10.600.10:FF:000007">
    <property type="entry name" value="Isoprene synthase, chloroplastic"/>
    <property type="match status" value="1"/>
</dbReference>
<dbReference type="Gene3D" id="1.10.600.10">
    <property type="entry name" value="Farnesyl Diphosphate Synthase"/>
    <property type="match status" value="1"/>
</dbReference>
<dbReference type="Gene3D" id="1.50.10.130">
    <property type="entry name" value="Terpene synthase, N-terminal domain"/>
    <property type="match status" value="1"/>
</dbReference>
<dbReference type="InterPro" id="IPR008949">
    <property type="entry name" value="Isoprenoid_synthase_dom_sf"/>
</dbReference>
<dbReference type="InterPro" id="IPR034741">
    <property type="entry name" value="Terpene_cyclase-like_1_C"/>
</dbReference>
<dbReference type="InterPro" id="IPR044814">
    <property type="entry name" value="Terpene_cyclase_plant_C1"/>
</dbReference>
<dbReference type="InterPro" id="IPR001906">
    <property type="entry name" value="Terpene_synth_N"/>
</dbReference>
<dbReference type="InterPro" id="IPR036965">
    <property type="entry name" value="Terpene_synth_N_sf"/>
</dbReference>
<dbReference type="InterPro" id="IPR050148">
    <property type="entry name" value="Terpene_synthase-like"/>
</dbReference>
<dbReference type="InterPro" id="IPR005630">
    <property type="entry name" value="Terpene_synthase_metal-bd"/>
</dbReference>
<dbReference type="InterPro" id="IPR008930">
    <property type="entry name" value="Terpenoid_cyclase/PrenylTrfase"/>
</dbReference>
<dbReference type="PANTHER" id="PTHR31225">
    <property type="entry name" value="OS04G0344100 PROTEIN-RELATED"/>
    <property type="match status" value="1"/>
</dbReference>
<dbReference type="PANTHER" id="PTHR31225:SF9">
    <property type="entry name" value="TERPENE SYNTHASE 10"/>
    <property type="match status" value="1"/>
</dbReference>
<dbReference type="Pfam" id="PF01397">
    <property type="entry name" value="Terpene_synth"/>
    <property type="match status" value="1"/>
</dbReference>
<dbReference type="Pfam" id="PF03936">
    <property type="entry name" value="Terpene_synth_C"/>
    <property type="match status" value="1"/>
</dbReference>
<dbReference type="SFLD" id="SFLDS00005">
    <property type="entry name" value="Isoprenoid_Synthase_Type_I"/>
    <property type="match status" value="1"/>
</dbReference>
<dbReference type="SFLD" id="SFLDG01019">
    <property type="entry name" value="Terpene_Cyclase_Like_1_C_Termi"/>
    <property type="match status" value="1"/>
</dbReference>
<dbReference type="SUPFAM" id="SSF48239">
    <property type="entry name" value="Terpenoid cyclases/Protein prenyltransferases"/>
    <property type="match status" value="1"/>
</dbReference>
<dbReference type="SUPFAM" id="SSF48576">
    <property type="entry name" value="Terpenoid synthases"/>
    <property type="match status" value="1"/>
</dbReference>
<keyword id="KW-0150">Chloroplast</keyword>
<keyword id="KW-0456">Lyase</keyword>
<keyword id="KW-0460">Magnesium</keyword>
<keyword id="KW-0479">Metal-binding</keyword>
<keyword id="KW-0934">Plastid</keyword>
<keyword id="KW-1185">Reference proteome</keyword>
<keyword id="KW-0809">Transit peptide</keyword>
<name>T33PK_CANSA</name>
<evidence type="ECO:0000250" key="1">
    <source>
        <dbReference type="UniProtKB" id="A0A1C9J6A7"/>
    </source>
</evidence>
<evidence type="ECO:0000250" key="2">
    <source>
        <dbReference type="UniProtKB" id="Q40577"/>
    </source>
</evidence>
<evidence type="ECO:0000255" key="3"/>
<evidence type="ECO:0000269" key="4">
    <source>
    </source>
</evidence>
<evidence type="ECO:0000303" key="5">
    <source>
    </source>
</evidence>
<evidence type="ECO:0000305" key="6"/>
<evidence type="ECO:0000312" key="7">
    <source>
        <dbReference type="EMBL" id="KAF4380278.1"/>
    </source>
</evidence>
<evidence type="ECO:0000312" key="8">
    <source>
        <dbReference type="EMBL" id="KAF4398961.1"/>
    </source>
</evidence>
<sequence>MFCRLGVHQFSPLSLILNTTKLARASTLSSACYPIQCTMVNSTNITNNTTIFDNHIHRRSANYEPPIWSFDYIQSLSSSQYKGETCTSRLNELEANVKEILLVEMKSNSLAQLEFIDALQGRLLSYRFETEINTILNEKYSINIFDNPNYNLYATALEFRLLRHHGYDVSQEIFNVFKDEITSKFKARTSGEDIIGVLALYEASFYGKKSESILEEARVSSIECLENYVAMETMTRNKPSLLVNDYDDDNNMLLLVNHALELPLYWRITRSEARWFIDLYEKNHNMNSTLLEFAKLDYNMVQSIYQEDLKHLSRWWSHTKLGEKMDFFRDRLMECFLWTVGIACEPEKSYYRRMSGRLYVLITTIDDIYDVYGTLEELELFTNAVERWDVKAMDDLPEYMRMPFFLLHNTINEMAFDVLGHQNFLNVKFLKRTWVDFCKHQLQEAKWFHSGYKPTFEEYINNAWISVSGPIILMDAYFSLTNPVTKDAINLLELGYPPIIYHASMILRLTDDLGTSNDEMKRGDIPKSIQCYMNDTGVSEDEARDHMKFLISELWKEINNEDENMDSPFSKQFLQNCKNLARISQFIYQYGDGHASQDSLSKQRISELPSIINHI</sequence>
<accession>A0A1V0QSF4</accession>
<accession>A0A7J6GBU0</accession>
<reference key="1">
    <citation type="journal article" date="2017" name="PLoS ONE">
        <title>Terpene synthases from Cannabis sativa.</title>
        <authorList>
            <person name="Booth J.K."/>
            <person name="Page J.E."/>
            <person name="Bohlmann J."/>
        </authorList>
    </citation>
    <scope>NUCLEOTIDE SEQUENCE [MRNA]</scope>
    <scope>FUNCTION</scope>
    <scope>CATALYTIC ACTIVITY</scope>
    <scope>PATHWAY</scope>
    <source>
        <strain>cv. Purple Kush TPS13</strain>
    </source>
</reference>
<reference key="2">
    <citation type="submission" date="2020-03" db="EMBL/GenBank/DDBJ databases">
        <title>Sequence and annotation of 42 cannabis genomes reveals extensive copy number variation in cannabinoid synthesis and pathogen resistance genes.</title>
        <authorList>
            <person name="Mckernan K.J."/>
            <person name="Helbert Y."/>
            <person name="Kane L.T."/>
            <person name="Ebling H."/>
            <person name="Zhang L."/>
            <person name="Liu B."/>
            <person name="Eaton Z."/>
            <person name="Mclaughlin S."/>
            <person name="Kingan S."/>
            <person name="Baybayan P."/>
            <person name="Concepcion G."/>
            <person name="Jordan M."/>
            <person name="Riva A."/>
            <person name="Barbazuk W."/>
            <person name="Harkins T."/>
        </authorList>
    </citation>
    <scope>NUCLEOTIDE SEQUENCE [LARGE SCALE GENOMIC DNA]</scope>
    <source>
        <strain>cv. Jamaican Lion 4</strain>
        <tissue>Leaf</tissue>
    </source>
</reference>
<protein>
    <recommendedName>
        <fullName evidence="5">Alpha-terpinene synthase TPS33PK, chloroplastic</fullName>
        <ecNumber evidence="4">4.2.3.115</ecNumber>
    </recommendedName>
    <alternativeName>
        <fullName evidence="5">Gamma-terpinene synthase TPS33PK</fullName>
        <ecNumber evidence="4">4.2.3.114</ecNumber>
    </alternativeName>
    <alternativeName>
        <fullName evidence="5">Terpene synthase 33PK</fullName>
        <shortName evidence="5">CsTPS33PK</shortName>
    </alternativeName>
</protein>